<organism>
    <name type="scientific">Francisella tularensis subsp. novicida (strain U112)</name>
    <dbReference type="NCBI Taxonomy" id="401614"/>
    <lineage>
        <taxon>Bacteria</taxon>
        <taxon>Pseudomonadati</taxon>
        <taxon>Pseudomonadota</taxon>
        <taxon>Gammaproteobacteria</taxon>
        <taxon>Thiotrichales</taxon>
        <taxon>Francisellaceae</taxon>
        <taxon>Francisella</taxon>
    </lineage>
</organism>
<proteinExistence type="inferred from homology"/>
<name>MINE_FRATN</name>
<protein>
    <recommendedName>
        <fullName evidence="1">Cell division topological specificity factor</fullName>
    </recommendedName>
</protein>
<dbReference type="EMBL" id="CP000439">
    <property type="protein sequence ID" value="ABK89235.1"/>
    <property type="molecule type" value="Genomic_DNA"/>
</dbReference>
<dbReference type="RefSeq" id="WP_003014812.1">
    <property type="nucleotide sequence ID" value="NZ_CP009633.1"/>
</dbReference>
<dbReference type="GeneID" id="75264169"/>
<dbReference type="KEGG" id="ftn:FTN_0329"/>
<dbReference type="KEGG" id="ftx:AW25_1711"/>
<dbReference type="BioCyc" id="FTUL401614:G1G75-342-MONOMER"/>
<dbReference type="Proteomes" id="UP000000762">
    <property type="component" value="Chromosome"/>
</dbReference>
<dbReference type="GO" id="GO:0051301">
    <property type="term" value="P:cell division"/>
    <property type="evidence" value="ECO:0007669"/>
    <property type="project" value="UniProtKB-KW"/>
</dbReference>
<dbReference type="GO" id="GO:0032955">
    <property type="term" value="P:regulation of division septum assembly"/>
    <property type="evidence" value="ECO:0007669"/>
    <property type="project" value="InterPro"/>
</dbReference>
<dbReference type="Gene3D" id="3.30.1070.10">
    <property type="entry name" value="Cell division topological specificity factor MinE"/>
    <property type="match status" value="1"/>
</dbReference>
<dbReference type="HAMAP" id="MF_00262">
    <property type="entry name" value="MinE"/>
    <property type="match status" value="1"/>
</dbReference>
<dbReference type="InterPro" id="IPR005527">
    <property type="entry name" value="MinE"/>
</dbReference>
<dbReference type="InterPro" id="IPR036707">
    <property type="entry name" value="MinE_sf"/>
</dbReference>
<dbReference type="NCBIfam" id="TIGR01215">
    <property type="entry name" value="minE"/>
    <property type="match status" value="1"/>
</dbReference>
<dbReference type="NCBIfam" id="NF001422">
    <property type="entry name" value="PRK00296.1"/>
    <property type="match status" value="1"/>
</dbReference>
<dbReference type="Pfam" id="PF03776">
    <property type="entry name" value="MinE"/>
    <property type="match status" value="1"/>
</dbReference>
<dbReference type="SUPFAM" id="SSF55229">
    <property type="entry name" value="Cell division protein MinE topological specificity domain"/>
    <property type="match status" value="1"/>
</dbReference>
<feature type="chain" id="PRO_0000298116" description="Cell division topological specificity factor">
    <location>
        <begin position="1"/>
        <end position="90"/>
    </location>
</feature>
<evidence type="ECO:0000255" key="1">
    <source>
        <dbReference type="HAMAP-Rule" id="MF_00262"/>
    </source>
</evidence>
<sequence>MLAKLFGLSKKQQSASVAKERLQIIVAHQRSELHPRSSKISSHLLAELKDEIIEVVKKYVALSEENIRDIDLKVEDSSKNSTIEVNIPFN</sequence>
<keyword id="KW-0131">Cell cycle</keyword>
<keyword id="KW-0132">Cell division</keyword>
<gene>
    <name evidence="1" type="primary">minE</name>
    <name type="ordered locus">FTN_0329</name>
</gene>
<accession>A0Q4S0</accession>
<comment type="function">
    <text evidence="1">Prevents the cell division inhibition by proteins MinC and MinD at internal division sites while permitting inhibition at polar sites. This ensures cell division at the proper site by restricting the formation of a division septum at the midpoint of the long axis of the cell.</text>
</comment>
<comment type="similarity">
    <text evidence="1">Belongs to the MinE family.</text>
</comment>
<reference key="1">
    <citation type="journal article" date="2007" name="Genome Biol.">
        <title>Comparison of Francisella tularensis genomes reveals evolutionary events associated with the emergence of human pathogenic strains.</title>
        <authorList>
            <person name="Rohmer L."/>
            <person name="Fong C."/>
            <person name="Abmayr S."/>
            <person name="Wasnick M."/>
            <person name="Larson Freeman T.J."/>
            <person name="Radey M."/>
            <person name="Guina T."/>
            <person name="Svensson K."/>
            <person name="Hayden H.S."/>
            <person name="Jacobs M."/>
            <person name="Gallagher L.A."/>
            <person name="Manoil C."/>
            <person name="Ernst R.K."/>
            <person name="Drees B."/>
            <person name="Buckley D."/>
            <person name="Haugen E."/>
            <person name="Bovee D."/>
            <person name="Zhou Y."/>
            <person name="Chang J."/>
            <person name="Levy R."/>
            <person name="Lim R."/>
            <person name="Gillett W."/>
            <person name="Guenthener D."/>
            <person name="Kang A."/>
            <person name="Shaffer S.A."/>
            <person name="Taylor G."/>
            <person name="Chen J."/>
            <person name="Gallis B."/>
            <person name="D'Argenio D.A."/>
            <person name="Forsman M."/>
            <person name="Olson M.V."/>
            <person name="Goodlett D.R."/>
            <person name="Kaul R."/>
            <person name="Miller S.I."/>
            <person name="Brittnacher M.J."/>
        </authorList>
    </citation>
    <scope>NUCLEOTIDE SEQUENCE [LARGE SCALE GENOMIC DNA]</scope>
    <source>
        <strain>U112</strain>
    </source>
</reference>